<comment type="function">
    <text evidence="1">Regulates arginine biosynthesis genes.</text>
</comment>
<comment type="pathway">
    <text>Amino-acid biosynthesis; L-arginine biosynthesis [regulation].</text>
</comment>
<comment type="subcellular location">
    <subcellularLocation>
        <location evidence="1">Cytoplasm</location>
    </subcellularLocation>
</comment>
<comment type="similarity">
    <text evidence="1">Belongs to the ArgR family.</text>
</comment>
<keyword id="KW-0028">Amino-acid biosynthesis</keyword>
<keyword id="KW-0055">Arginine biosynthesis</keyword>
<keyword id="KW-0963">Cytoplasm</keyword>
<keyword id="KW-0238">DNA-binding</keyword>
<keyword id="KW-1185">Reference proteome</keyword>
<keyword id="KW-0678">Repressor</keyword>
<keyword id="KW-0804">Transcription</keyword>
<keyword id="KW-0805">Transcription regulation</keyword>
<name>ARGR_PHOLL</name>
<proteinExistence type="inferred from homology"/>
<protein>
    <recommendedName>
        <fullName evidence="1">Arginine repressor</fullName>
    </recommendedName>
</protein>
<organism>
    <name type="scientific">Photorhabdus laumondii subsp. laumondii (strain DSM 15139 / CIP 105565 / TT01)</name>
    <name type="common">Photorhabdus luminescens subsp. laumondii</name>
    <dbReference type="NCBI Taxonomy" id="243265"/>
    <lineage>
        <taxon>Bacteria</taxon>
        <taxon>Pseudomonadati</taxon>
        <taxon>Pseudomonadota</taxon>
        <taxon>Gammaproteobacteria</taxon>
        <taxon>Enterobacterales</taxon>
        <taxon>Morganellaceae</taxon>
        <taxon>Photorhabdus</taxon>
    </lineage>
</organism>
<sequence>MRTPSKQEDLVKAFKALLKEEKFSSQGEIVTALLEEGFENINQSKVSRMLTKFGAVRTRNAKMEMVYCLPAELGVPTATSPLKNLVLDVDYNHPIVVIRTSPGAAQLIARLLDSLGKSEGILGSIAGDDTIFVTLTRDSTTEQLRGAILGLFEQEL</sequence>
<accession>Q7MYW8</accession>
<gene>
    <name evidence="1" type="primary">argR</name>
    <name type="ordered locus">plu4548</name>
</gene>
<evidence type="ECO:0000255" key="1">
    <source>
        <dbReference type="HAMAP-Rule" id="MF_00173"/>
    </source>
</evidence>
<feature type="chain" id="PRO_0000205108" description="Arginine repressor">
    <location>
        <begin position="1"/>
        <end position="156"/>
    </location>
</feature>
<reference key="1">
    <citation type="journal article" date="2003" name="Nat. Biotechnol.">
        <title>The genome sequence of the entomopathogenic bacterium Photorhabdus luminescens.</title>
        <authorList>
            <person name="Duchaud E."/>
            <person name="Rusniok C."/>
            <person name="Frangeul L."/>
            <person name="Buchrieser C."/>
            <person name="Givaudan A."/>
            <person name="Taourit S."/>
            <person name="Bocs S."/>
            <person name="Boursaux-Eude C."/>
            <person name="Chandler M."/>
            <person name="Charles J.-F."/>
            <person name="Dassa E."/>
            <person name="Derose R."/>
            <person name="Derzelle S."/>
            <person name="Freyssinet G."/>
            <person name="Gaudriault S."/>
            <person name="Medigue C."/>
            <person name="Lanois A."/>
            <person name="Powell K."/>
            <person name="Siguier P."/>
            <person name="Vincent R."/>
            <person name="Wingate V."/>
            <person name="Zouine M."/>
            <person name="Glaser P."/>
            <person name="Boemare N."/>
            <person name="Danchin A."/>
            <person name="Kunst F."/>
        </authorList>
    </citation>
    <scope>NUCLEOTIDE SEQUENCE [LARGE SCALE GENOMIC DNA]</scope>
    <source>
        <strain>DSM 15139 / CIP 105565 / TT01</strain>
    </source>
</reference>
<dbReference type="EMBL" id="BX571874">
    <property type="protein sequence ID" value="CAE16920.1"/>
    <property type="molecule type" value="Genomic_DNA"/>
</dbReference>
<dbReference type="RefSeq" id="WP_011148624.1">
    <property type="nucleotide sequence ID" value="NC_005126.1"/>
</dbReference>
<dbReference type="SMR" id="Q7MYW8"/>
<dbReference type="STRING" id="243265.plu4548"/>
<dbReference type="GeneID" id="88805010"/>
<dbReference type="KEGG" id="plu:plu4548"/>
<dbReference type="eggNOG" id="COG1438">
    <property type="taxonomic scope" value="Bacteria"/>
</dbReference>
<dbReference type="HOGENOM" id="CLU_097103_2_0_6"/>
<dbReference type="OrthoDB" id="7060358at2"/>
<dbReference type="UniPathway" id="UPA00068"/>
<dbReference type="Proteomes" id="UP000002514">
    <property type="component" value="Chromosome"/>
</dbReference>
<dbReference type="GO" id="GO:0005737">
    <property type="term" value="C:cytoplasm"/>
    <property type="evidence" value="ECO:0007669"/>
    <property type="project" value="UniProtKB-SubCell"/>
</dbReference>
<dbReference type="GO" id="GO:0034618">
    <property type="term" value="F:arginine binding"/>
    <property type="evidence" value="ECO:0007669"/>
    <property type="project" value="InterPro"/>
</dbReference>
<dbReference type="GO" id="GO:0003677">
    <property type="term" value="F:DNA binding"/>
    <property type="evidence" value="ECO:0007669"/>
    <property type="project" value="UniProtKB-KW"/>
</dbReference>
<dbReference type="GO" id="GO:0003700">
    <property type="term" value="F:DNA-binding transcription factor activity"/>
    <property type="evidence" value="ECO:0007669"/>
    <property type="project" value="UniProtKB-UniRule"/>
</dbReference>
<dbReference type="GO" id="GO:0006526">
    <property type="term" value="P:L-arginine biosynthetic process"/>
    <property type="evidence" value="ECO:0007669"/>
    <property type="project" value="UniProtKB-UniPathway"/>
</dbReference>
<dbReference type="GO" id="GO:0051259">
    <property type="term" value="P:protein complex oligomerization"/>
    <property type="evidence" value="ECO:0007669"/>
    <property type="project" value="InterPro"/>
</dbReference>
<dbReference type="GO" id="GO:1900079">
    <property type="term" value="P:regulation of arginine biosynthetic process"/>
    <property type="evidence" value="ECO:0007669"/>
    <property type="project" value="UniProtKB-UniRule"/>
</dbReference>
<dbReference type="Gene3D" id="3.30.1360.40">
    <property type="match status" value="1"/>
</dbReference>
<dbReference type="Gene3D" id="1.10.10.10">
    <property type="entry name" value="Winged helix-like DNA-binding domain superfamily/Winged helix DNA-binding domain"/>
    <property type="match status" value="1"/>
</dbReference>
<dbReference type="HAMAP" id="MF_00173">
    <property type="entry name" value="Arg_repressor"/>
    <property type="match status" value="1"/>
</dbReference>
<dbReference type="InterPro" id="IPR001669">
    <property type="entry name" value="Arg_repress"/>
</dbReference>
<dbReference type="InterPro" id="IPR020899">
    <property type="entry name" value="Arg_repress_C"/>
</dbReference>
<dbReference type="InterPro" id="IPR036251">
    <property type="entry name" value="Arg_repress_C_sf"/>
</dbReference>
<dbReference type="InterPro" id="IPR020900">
    <property type="entry name" value="Arg_repress_DNA-bd"/>
</dbReference>
<dbReference type="InterPro" id="IPR036388">
    <property type="entry name" value="WH-like_DNA-bd_sf"/>
</dbReference>
<dbReference type="InterPro" id="IPR036390">
    <property type="entry name" value="WH_DNA-bd_sf"/>
</dbReference>
<dbReference type="NCBIfam" id="TIGR01529">
    <property type="entry name" value="argR_whole"/>
    <property type="match status" value="1"/>
</dbReference>
<dbReference type="NCBIfam" id="NF003457">
    <property type="entry name" value="PRK05066.1"/>
    <property type="match status" value="1"/>
</dbReference>
<dbReference type="PANTHER" id="PTHR34471">
    <property type="entry name" value="ARGININE REPRESSOR"/>
    <property type="match status" value="1"/>
</dbReference>
<dbReference type="PANTHER" id="PTHR34471:SF1">
    <property type="entry name" value="ARGININE REPRESSOR"/>
    <property type="match status" value="1"/>
</dbReference>
<dbReference type="Pfam" id="PF01316">
    <property type="entry name" value="Arg_repressor"/>
    <property type="match status" value="1"/>
</dbReference>
<dbReference type="Pfam" id="PF02863">
    <property type="entry name" value="Arg_repressor_C"/>
    <property type="match status" value="1"/>
</dbReference>
<dbReference type="PRINTS" id="PR01467">
    <property type="entry name" value="ARGREPRESSOR"/>
</dbReference>
<dbReference type="SUPFAM" id="SSF55252">
    <property type="entry name" value="C-terminal domain of arginine repressor"/>
    <property type="match status" value="1"/>
</dbReference>
<dbReference type="SUPFAM" id="SSF46785">
    <property type="entry name" value="Winged helix' DNA-binding domain"/>
    <property type="match status" value="1"/>
</dbReference>